<protein>
    <recommendedName>
        <fullName evidence="1">Ribosomal RNA large subunit methyltransferase K/L</fullName>
    </recommendedName>
    <domain>
        <recommendedName>
            <fullName evidence="1">23S rRNA m2G2445 methyltransferase</fullName>
            <ecNumber evidence="1">2.1.1.173</ecNumber>
        </recommendedName>
        <alternativeName>
            <fullName evidence="1">rRNA (guanine-N(2)-)-methyltransferase RlmL</fullName>
        </alternativeName>
    </domain>
    <domain>
        <recommendedName>
            <fullName evidence="1">23S rRNA m7G2069 methyltransferase</fullName>
            <ecNumber evidence="1">2.1.1.264</ecNumber>
        </recommendedName>
        <alternativeName>
            <fullName evidence="1">rRNA (guanine-N(7)-)-methyltransferase RlmK</fullName>
        </alternativeName>
    </domain>
</protein>
<gene>
    <name evidence="1" type="primary">rlmL</name>
    <name type="ordered locus">BUsg_351</name>
</gene>
<reference key="1">
    <citation type="journal article" date="2002" name="Science">
        <title>50 million years of genomic stasis in endosymbiotic bacteria.</title>
        <authorList>
            <person name="Tamas I."/>
            <person name="Klasson L."/>
            <person name="Canbaeck B."/>
            <person name="Naeslund A.K."/>
            <person name="Eriksson A.-S."/>
            <person name="Wernegreen J.J."/>
            <person name="Sandstroem J.P."/>
            <person name="Moran N.A."/>
            <person name="Andersson S.G.E."/>
        </authorList>
    </citation>
    <scope>NUCLEOTIDE SEQUENCE [LARGE SCALE GENOMIC DNA]</scope>
    <source>
        <strain>Sg</strain>
    </source>
</reference>
<evidence type="ECO:0000255" key="1">
    <source>
        <dbReference type="HAMAP-Rule" id="MF_01858"/>
    </source>
</evidence>
<sequence>MNYLFASTNFGCEELLEKELRALGAKNLKVVKGGIYYEGEDSILYNSLMWSRIASRIFLCIKKFTIKNSNDLYKNTYNINWTQILYLEKTFLVKFRGTNNIIRNSLFGALKIKDAIVDTFYQKYSARPNINLLTPDVRIISYLCQNLVHIMLDLSGEALNKRGYRKFFNISPIKENLSAAIILSSGWKKNTPLIDPMCGSGTLLIEAAMISSDRAPGLKRTEWGFKSWKGHKEKVWKETLKKAKERFKIGIKKCLKNYFIGYDCNPDVIKKAQKNVINANLENIISFFACNLSHLKNPYQKEEIGTLISNPPYGERCKTENNLIALYIELGIMSKKYFEKWNLSVFSSSEFLLNFLQMKSYKNFCLKNGPLYCTLKNYEIFLNKFNNTNKEYENRLEKNFKKLKKWNDLKEIECFRVYDSDLPNYKLIVDVYKKWLVIQEYQAPKSINYEKAHKRLCSAIYHSKEILSIPTNNVVIKFRKKQKRKEQYQKLFNSNSFFIIREYHVKLLVNLIDYLDTGLFSEHRLVRKLIGSMSKGKDFLNLFSYTGAASVYAGLGKSKSITTVDISNTYIQWSMRNMSINNLINSKNIFIQKDCLEWIISTKNKFDLIFINPPTFSNSKRMKKSFELKRDYIKLMINLKQILRKDGNIIFSSSTHNFEIDLNNIKKINLYAKKITNLVKTKDFLKKNYHSWLIKHI</sequence>
<dbReference type="EC" id="2.1.1.173" evidence="1"/>
<dbReference type="EC" id="2.1.1.264" evidence="1"/>
<dbReference type="EMBL" id="AE013218">
    <property type="protein sequence ID" value="AAM67904.1"/>
    <property type="molecule type" value="Genomic_DNA"/>
</dbReference>
<dbReference type="RefSeq" id="WP_011053871.1">
    <property type="nucleotide sequence ID" value="NC_004061.1"/>
</dbReference>
<dbReference type="SMR" id="Q8K9I4"/>
<dbReference type="STRING" id="198804.BUsg_351"/>
<dbReference type="GeneID" id="93003821"/>
<dbReference type="KEGG" id="bas:BUsg_351"/>
<dbReference type="eggNOG" id="COG0116">
    <property type="taxonomic scope" value="Bacteria"/>
</dbReference>
<dbReference type="eggNOG" id="COG1092">
    <property type="taxonomic scope" value="Bacteria"/>
</dbReference>
<dbReference type="HOGENOM" id="CLU_014042_2_0_6"/>
<dbReference type="Proteomes" id="UP000000416">
    <property type="component" value="Chromosome"/>
</dbReference>
<dbReference type="GO" id="GO:0005737">
    <property type="term" value="C:cytoplasm"/>
    <property type="evidence" value="ECO:0007669"/>
    <property type="project" value="UniProtKB-SubCell"/>
</dbReference>
<dbReference type="GO" id="GO:0052915">
    <property type="term" value="F:23S rRNA (guanine(2445)-N(2))-methyltransferase activity"/>
    <property type="evidence" value="ECO:0007669"/>
    <property type="project" value="UniProtKB-UniRule"/>
</dbReference>
<dbReference type="GO" id="GO:0003723">
    <property type="term" value="F:RNA binding"/>
    <property type="evidence" value="ECO:0007669"/>
    <property type="project" value="UniProtKB-KW"/>
</dbReference>
<dbReference type="GO" id="GO:0070043">
    <property type="term" value="F:rRNA (guanine-N7-)-methyltransferase activity"/>
    <property type="evidence" value="ECO:0007669"/>
    <property type="project" value="UniProtKB-UniRule"/>
</dbReference>
<dbReference type="CDD" id="cd02440">
    <property type="entry name" value="AdoMet_MTases"/>
    <property type="match status" value="1"/>
</dbReference>
<dbReference type="CDD" id="cd11715">
    <property type="entry name" value="THUMP_AdoMetMT"/>
    <property type="match status" value="1"/>
</dbReference>
<dbReference type="Gene3D" id="3.30.2130.30">
    <property type="match status" value="1"/>
</dbReference>
<dbReference type="Gene3D" id="3.30.750.80">
    <property type="entry name" value="RNA methyltransferase domain (HRMD) like"/>
    <property type="match status" value="1"/>
</dbReference>
<dbReference type="Gene3D" id="3.40.50.150">
    <property type="entry name" value="Vaccinia Virus protein VP39"/>
    <property type="match status" value="2"/>
</dbReference>
<dbReference type="HAMAP" id="MF_01858">
    <property type="entry name" value="23SrRNA_methyltr_KL"/>
    <property type="match status" value="1"/>
</dbReference>
<dbReference type="InterPro" id="IPR017244">
    <property type="entry name" value="23SrRNA_methyltr_KL"/>
</dbReference>
<dbReference type="InterPro" id="IPR002052">
    <property type="entry name" value="DNA_methylase_N6_adenine_CS"/>
</dbReference>
<dbReference type="InterPro" id="IPR000241">
    <property type="entry name" value="RlmKL-like_Mtase"/>
</dbReference>
<dbReference type="InterPro" id="IPR053943">
    <property type="entry name" value="RlmKL-like_Mtase_CS"/>
</dbReference>
<dbReference type="InterPro" id="IPR054170">
    <property type="entry name" value="RlmL_1st"/>
</dbReference>
<dbReference type="InterPro" id="IPR019614">
    <property type="entry name" value="SAM-dep_methyl-trfase"/>
</dbReference>
<dbReference type="InterPro" id="IPR029063">
    <property type="entry name" value="SAM-dependent_MTases_sf"/>
</dbReference>
<dbReference type="InterPro" id="IPR004114">
    <property type="entry name" value="THUMP_dom"/>
</dbReference>
<dbReference type="NCBIfam" id="NF008748">
    <property type="entry name" value="PRK11783.1"/>
    <property type="match status" value="1"/>
</dbReference>
<dbReference type="PANTHER" id="PTHR47313">
    <property type="entry name" value="RIBOSOMAL RNA LARGE SUBUNIT METHYLTRANSFERASE K/L"/>
    <property type="match status" value="1"/>
</dbReference>
<dbReference type="PANTHER" id="PTHR47313:SF1">
    <property type="entry name" value="RIBOSOMAL RNA LARGE SUBUNIT METHYLTRANSFERASE K_L"/>
    <property type="match status" value="1"/>
</dbReference>
<dbReference type="Pfam" id="PF10672">
    <property type="entry name" value="Methyltrans_SAM"/>
    <property type="match status" value="1"/>
</dbReference>
<dbReference type="Pfam" id="PF22020">
    <property type="entry name" value="RlmL_1st"/>
    <property type="match status" value="1"/>
</dbReference>
<dbReference type="Pfam" id="PF02926">
    <property type="entry name" value="THUMP"/>
    <property type="match status" value="1"/>
</dbReference>
<dbReference type="Pfam" id="PF01170">
    <property type="entry name" value="UPF0020"/>
    <property type="match status" value="1"/>
</dbReference>
<dbReference type="PIRSF" id="PIRSF037618">
    <property type="entry name" value="RNA_Mtase_bacteria_prd"/>
    <property type="match status" value="1"/>
</dbReference>
<dbReference type="SMART" id="SM00981">
    <property type="entry name" value="THUMP"/>
    <property type="match status" value="1"/>
</dbReference>
<dbReference type="SUPFAM" id="SSF53335">
    <property type="entry name" value="S-adenosyl-L-methionine-dependent methyltransferases"/>
    <property type="match status" value="2"/>
</dbReference>
<dbReference type="PROSITE" id="PS51165">
    <property type="entry name" value="THUMP"/>
    <property type="match status" value="1"/>
</dbReference>
<dbReference type="PROSITE" id="PS01261">
    <property type="entry name" value="UPF0020"/>
    <property type="match status" value="1"/>
</dbReference>
<accession>Q8K9I4</accession>
<keyword id="KW-0963">Cytoplasm</keyword>
<keyword id="KW-0489">Methyltransferase</keyword>
<keyword id="KW-0694">RNA-binding</keyword>
<keyword id="KW-0698">rRNA processing</keyword>
<keyword id="KW-0949">S-adenosyl-L-methionine</keyword>
<keyword id="KW-0808">Transferase</keyword>
<proteinExistence type="inferred from homology"/>
<comment type="function">
    <text evidence="1">Specifically methylates the guanine in position 2445 (m2G2445) and the guanine in position 2069 (m7G2069) of 23S rRNA.</text>
</comment>
<comment type="catalytic activity">
    <reaction evidence="1">
        <text>guanosine(2445) in 23S rRNA + S-adenosyl-L-methionine = N(2)-methylguanosine(2445) in 23S rRNA + S-adenosyl-L-homocysteine + H(+)</text>
        <dbReference type="Rhea" id="RHEA:42740"/>
        <dbReference type="Rhea" id="RHEA-COMP:10215"/>
        <dbReference type="Rhea" id="RHEA-COMP:10216"/>
        <dbReference type="ChEBI" id="CHEBI:15378"/>
        <dbReference type="ChEBI" id="CHEBI:57856"/>
        <dbReference type="ChEBI" id="CHEBI:59789"/>
        <dbReference type="ChEBI" id="CHEBI:74269"/>
        <dbReference type="ChEBI" id="CHEBI:74481"/>
        <dbReference type="EC" id="2.1.1.173"/>
    </reaction>
</comment>
<comment type="catalytic activity">
    <reaction evidence="1">
        <text>guanosine(2069) in 23S rRNA + S-adenosyl-L-methionine = N(2)-methylguanosine(2069) in 23S rRNA + S-adenosyl-L-homocysteine + H(+)</text>
        <dbReference type="Rhea" id="RHEA:43772"/>
        <dbReference type="Rhea" id="RHEA-COMP:10688"/>
        <dbReference type="Rhea" id="RHEA-COMP:10689"/>
        <dbReference type="ChEBI" id="CHEBI:15378"/>
        <dbReference type="ChEBI" id="CHEBI:57856"/>
        <dbReference type="ChEBI" id="CHEBI:59789"/>
        <dbReference type="ChEBI" id="CHEBI:74269"/>
        <dbReference type="ChEBI" id="CHEBI:74481"/>
        <dbReference type="EC" id="2.1.1.264"/>
    </reaction>
</comment>
<comment type="subcellular location">
    <subcellularLocation>
        <location evidence="1">Cytoplasm</location>
    </subcellularLocation>
</comment>
<comment type="similarity">
    <text evidence="1">Belongs to the methyltransferase superfamily. RlmKL family.</text>
</comment>
<feature type="chain" id="PRO_0000140476" description="Ribosomal RNA large subunit methyltransferase K/L">
    <location>
        <begin position="1"/>
        <end position="697"/>
    </location>
</feature>
<feature type="domain" description="THUMP" evidence="1">
    <location>
        <begin position="43"/>
        <end position="154"/>
    </location>
</feature>
<organism>
    <name type="scientific">Buchnera aphidicola subsp. Schizaphis graminum (strain Sg)</name>
    <dbReference type="NCBI Taxonomy" id="198804"/>
    <lineage>
        <taxon>Bacteria</taxon>
        <taxon>Pseudomonadati</taxon>
        <taxon>Pseudomonadota</taxon>
        <taxon>Gammaproteobacteria</taxon>
        <taxon>Enterobacterales</taxon>
        <taxon>Erwiniaceae</taxon>
        <taxon>Buchnera</taxon>
    </lineage>
</organism>
<name>RLMKL_BUCAP</name>